<protein>
    <recommendedName>
        <fullName evidence="1">Putative manganese efflux pump MntP 2</fullName>
    </recommendedName>
</protein>
<proteinExistence type="inferred from homology"/>
<organism>
    <name type="scientific">Wolinella succinogenes (strain ATCC 29543 / DSM 1740 / CCUG 13145 / JCM 31913 / LMG 7466 / NCTC 11488 / FDC 602W)</name>
    <name type="common">Vibrio succinogenes</name>
    <dbReference type="NCBI Taxonomy" id="273121"/>
    <lineage>
        <taxon>Bacteria</taxon>
        <taxon>Pseudomonadati</taxon>
        <taxon>Campylobacterota</taxon>
        <taxon>Epsilonproteobacteria</taxon>
        <taxon>Campylobacterales</taxon>
        <taxon>Helicobacteraceae</taxon>
        <taxon>Wolinella</taxon>
    </lineage>
</organism>
<name>MNTP2_WOLSU</name>
<accession>Q7M915</accession>
<evidence type="ECO:0000255" key="1">
    <source>
        <dbReference type="HAMAP-Rule" id="MF_01521"/>
    </source>
</evidence>
<reference key="1">
    <citation type="journal article" date="2003" name="Proc. Natl. Acad. Sci. U.S.A.">
        <title>Complete genome sequence and analysis of Wolinella succinogenes.</title>
        <authorList>
            <person name="Baar C."/>
            <person name="Eppinger M."/>
            <person name="Raddatz G."/>
            <person name="Simon J."/>
            <person name="Lanz C."/>
            <person name="Klimmek O."/>
            <person name="Nandakumar R."/>
            <person name="Gross R."/>
            <person name="Rosinus A."/>
            <person name="Keller H."/>
            <person name="Jagtap P."/>
            <person name="Linke B."/>
            <person name="Meyer F."/>
            <person name="Lederer H."/>
            <person name="Schuster S.C."/>
        </authorList>
    </citation>
    <scope>NUCLEOTIDE SEQUENCE [LARGE SCALE GENOMIC DNA]</scope>
    <source>
        <strain>ATCC 29543 / DSM 1740 / CCUG 13145 / JCM 31913 / LMG 7466 / NCTC 11488 / FDC 602W</strain>
    </source>
</reference>
<sequence>MIELTALAIALSMDAVAVSIALGSKCEEEIRQLALKAGGFFGVAQMVMPLLGFYLGVQLHDYIGGIHHWVALGVLGFLGLKMIREATQGEKELALSSHPSSSKLLLLAFVTSLDAMAAGLTLTLLGLPLWFCLLFIGGSTFLLSFGGVHLGRKSGTYLEEKAEYLGGIILILIGVKIFIEHS</sequence>
<gene>
    <name evidence="1" type="primary">mntP2</name>
    <name type="ordered locus">WS1268</name>
</gene>
<feature type="chain" id="PRO_0000155669" description="Putative manganese efflux pump MntP 2">
    <location>
        <begin position="1"/>
        <end position="182"/>
    </location>
</feature>
<feature type="transmembrane region" description="Helical" evidence="1">
    <location>
        <begin position="2"/>
        <end position="22"/>
    </location>
</feature>
<feature type="transmembrane region" description="Helical" evidence="1">
    <location>
        <begin position="37"/>
        <end position="57"/>
    </location>
</feature>
<feature type="transmembrane region" description="Helical" evidence="1">
    <location>
        <begin position="63"/>
        <end position="83"/>
    </location>
</feature>
<feature type="transmembrane region" description="Helical" evidence="1">
    <location>
        <begin position="104"/>
        <end position="123"/>
    </location>
</feature>
<feature type="transmembrane region" description="Helical" evidence="1">
    <location>
        <begin position="127"/>
        <end position="149"/>
    </location>
</feature>
<feature type="transmembrane region" description="Helical" evidence="1">
    <location>
        <begin position="162"/>
        <end position="182"/>
    </location>
</feature>
<comment type="function">
    <text evidence="1">Probably functions as a manganese efflux pump.</text>
</comment>
<comment type="subcellular location">
    <subcellularLocation>
        <location evidence="1">Cell inner membrane</location>
        <topology evidence="1">Multi-pass membrane protein</topology>
    </subcellularLocation>
</comment>
<comment type="similarity">
    <text evidence="1">Belongs to the MntP (TC 9.B.29) family.</text>
</comment>
<dbReference type="EMBL" id="BX571660">
    <property type="protein sequence ID" value="CAE10347.1"/>
    <property type="molecule type" value="Genomic_DNA"/>
</dbReference>
<dbReference type="RefSeq" id="WP_011139133.1">
    <property type="nucleotide sequence ID" value="NC_005090.1"/>
</dbReference>
<dbReference type="STRING" id="273121.WS1268"/>
<dbReference type="KEGG" id="wsu:WS1268"/>
<dbReference type="eggNOG" id="COG1971">
    <property type="taxonomic scope" value="Bacteria"/>
</dbReference>
<dbReference type="HOGENOM" id="CLU_096410_3_0_7"/>
<dbReference type="Proteomes" id="UP000000422">
    <property type="component" value="Chromosome"/>
</dbReference>
<dbReference type="GO" id="GO:0005886">
    <property type="term" value="C:plasma membrane"/>
    <property type="evidence" value="ECO:0007669"/>
    <property type="project" value="UniProtKB-SubCell"/>
</dbReference>
<dbReference type="GO" id="GO:0005384">
    <property type="term" value="F:manganese ion transmembrane transporter activity"/>
    <property type="evidence" value="ECO:0007669"/>
    <property type="project" value="UniProtKB-UniRule"/>
</dbReference>
<dbReference type="HAMAP" id="MF_01521">
    <property type="entry name" value="MntP_pump"/>
    <property type="match status" value="1"/>
</dbReference>
<dbReference type="InterPro" id="IPR003810">
    <property type="entry name" value="Mntp/YtaF"/>
</dbReference>
<dbReference type="InterPro" id="IPR022929">
    <property type="entry name" value="Put_MntP"/>
</dbReference>
<dbReference type="PANTHER" id="PTHR35529">
    <property type="entry name" value="MANGANESE EFFLUX PUMP MNTP-RELATED"/>
    <property type="match status" value="1"/>
</dbReference>
<dbReference type="PANTHER" id="PTHR35529:SF1">
    <property type="entry name" value="MANGANESE EFFLUX PUMP MNTP-RELATED"/>
    <property type="match status" value="1"/>
</dbReference>
<dbReference type="Pfam" id="PF02659">
    <property type="entry name" value="Mntp"/>
    <property type="match status" value="1"/>
</dbReference>
<keyword id="KW-0997">Cell inner membrane</keyword>
<keyword id="KW-1003">Cell membrane</keyword>
<keyword id="KW-0406">Ion transport</keyword>
<keyword id="KW-0464">Manganese</keyword>
<keyword id="KW-0472">Membrane</keyword>
<keyword id="KW-1185">Reference proteome</keyword>
<keyword id="KW-0812">Transmembrane</keyword>
<keyword id="KW-1133">Transmembrane helix</keyword>
<keyword id="KW-0813">Transport</keyword>